<gene>
    <name type="ordered locus">MA_3706</name>
</gene>
<dbReference type="EC" id="3.6.1.66" evidence="1"/>
<dbReference type="EMBL" id="AE010299">
    <property type="protein sequence ID" value="AAM07061.1"/>
    <property type="molecule type" value="Genomic_DNA"/>
</dbReference>
<dbReference type="RefSeq" id="WP_011023613.1">
    <property type="nucleotide sequence ID" value="NC_003552.1"/>
</dbReference>
<dbReference type="SMR" id="Q8TJS1"/>
<dbReference type="FunCoup" id="Q8TJS1">
    <property type="interactions" value="218"/>
</dbReference>
<dbReference type="STRING" id="188937.MA_3706"/>
<dbReference type="EnsemblBacteria" id="AAM07061">
    <property type="protein sequence ID" value="AAM07061"/>
    <property type="gene ID" value="MA_3706"/>
</dbReference>
<dbReference type="GeneID" id="1475599"/>
<dbReference type="KEGG" id="mac:MA_3706"/>
<dbReference type="HOGENOM" id="CLU_082080_1_0_2"/>
<dbReference type="InParanoid" id="Q8TJS1"/>
<dbReference type="OrthoDB" id="372108at2157"/>
<dbReference type="PhylomeDB" id="Q8TJS1"/>
<dbReference type="Proteomes" id="UP000002487">
    <property type="component" value="Chromosome"/>
</dbReference>
<dbReference type="GO" id="GO:0005737">
    <property type="term" value="C:cytoplasm"/>
    <property type="evidence" value="ECO:0000318"/>
    <property type="project" value="GO_Central"/>
</dbReference>
<dbReference type="GO" id="GO:0035870">
    <property type="term" value="F:dITP diphosphatase activity"/>
    <property type="evidence" value="ECO:0007669"/>
    <property type="project" value="RHEA"/>
</dbReference>
<dbReference type="GO" id="GO:0036220">
    <property type="term" value="F:ITP diphosphatase activity"/>
    <property type="evidence" value="ECO:0007669"/>
    <property type="project" value="UniProtKB-EC"/>
</dbReference>
<dbReference type="GO" id="GO:0046872">
    <property type="term" value="F:metal ion binding"/>
    <property type="evidence" value="ECO:0007669"/>
    <property type="project" value="UniProtKB-KW"/>
</dbReference>
<dbReference type="GO" id="GO:0047429">
    <property type="term" value="F:nucleoside triphosphate diphosphatase activity"/>
    <property type="evidence" value="ECO:0000318"/>
    <property type="project" value="GO_Central"/>
</dbReference>
<dbReference type="GO" id="GO:0000166">
    <property type="term" value="F:nucleotide binding"/>
    <property type="evidence" value="ECO:0007669"/>
    <property type="project" value="UniProtKB-KW"/>
</dbReference>
<dbReference type="GO" id="GO:0017111">
    <property type="term" value="F:ribonucleoside triphosphate phosphatase activity"/>
    <property type="evidence" value="ECO:0007669"/>
    <property type="project" value="InterPro"/>
</dbReference>
<dbReference type="GO" id="GO:0036222">
    <property type="term" value="F:XTP diphosphatase activity"/>
    <property type="evidence" value="ECO:0007669"/>
    <property type="project" value="RHEA"/>
</dbReference>
<dbReference type="GO" id="GO:0009143">
    <property type="term" value="P:nucleoside triphosphate catabolic process"/>
    <property type="evidence" value="ECO:0000318"/>
    <property type="project" value="GO_Central"/>
</dbReference>
<dbReference type="GO" id="GO:0009117">
    <property type="term" value="P:nucleotide metabolic process"/>
    <property type="evidence" value="ECO:0007669"/>
    <property type="project" value="UniProtKB-KW"/>
</dbReference>
<dbReference type="GO" id="GO:0009146">
    <property type="term" value="P:purine nucleoside triphosphate catabolic process"/>
    <property type="evidence" value="ECO:0007669"/>
    <property type="project" value="UniProtKB-UniRule"/>
</dbReference>
<dbReference type="CDD" id="cd00515">
    <property type="entry name" value="HAM1"/>
    <property type="match status" value="1"/>
</dbReference>
<dbReference type="FunFam" id="3.90.950.10:FF:000001">
    <property type="entry name" value="dITP/XTP pyrophosphatase"/>
    <property type="match status" value="1"/>
</dbReference>
<dbReference type="Gene3D" id="3.90.950.10">
    <property type="match status" value="1"/>
</dbReference>
<dbReference type="HAMAP" id="MF_01405">
    <property type="entry name" value="Non_canon_purine_NTPase"/>
    <property type="match status" value="1"/>
</dbReference>
<dbReference type="InterPro" id="IPR020922">
    <property type="entry name" value="dITP/XTP_pyrophosphatase"/>
</dbReference>
<dbReference type="InterPro" id="IPR029001">
    <property type="entry name" value="ITPase-like_fam"/>
</dbReference>
<dbReference type="InterPro" id="IPR002637">
    <property type="entry name" value="RdgB/HAM1"/>
</dbReference>
<dbReference type="NCBIfam" id="NF011396">
    <property type="entry name" value="PRK14821.1"/>
    <property type="match status" value="1"/>
</dbReference>
<dbReference type="NCBIfam" id="TIGR00042">
    <property type="entry name" value="RdgB/HAM1 family non-canonical purine NTP pyrophosphatase"/>
    <property type="match status" value="1"/>
</dbReference>
<dbReference type="PANTHER" id="PTHR11067:SF9">
    <property type="entry name" value="INOSINE TRIPHOSPHATE PYROPHOSPHATASE"/>
    <property type="match status" value="1"/>
</dbReference>
<dbReference type="PANTHER" id="PTHR11067">
    <property type="entry name" value="INOSINE TRIPHOSPHATE PYROPHOSPHATASE/HAM1 PROTEIN"/>
    <property type="match status" value="1"/>
</dbReference>
<dbReference type="Pfam" id="PF01725">
    <property type="entry name" value="Ham1p_like"/>
    <property type="match status" value="1"/>
</dbReference>
<dbReference type="SUPFAM" id="SSF52972">
    <property type="entry name" value="ITPase-like"/>
    <property type="match status" value="1"/>
</dbReference>
<reference key="1">
    <citation type="journal article" date="2002" name="Genome Res.">
        <title>The genome of Methanosarcina acetivorans reveals extensive metabolic and physiological diversity.</title>
        <authorList>
            <person name="Galagan J.E."/>
            <person name="Nusbaum C."/>
            <person name="Roy A."/>
            <person name="Endrizzi M.G."/>
            <person name="Macdonald P."/>
            <person name="FitzHugh W."/>
            <person name="Calvo S."/>
            <person name="Engels R."/>
            <person name="Smirnov S."/>
            <person name="Atnoor D."/>
            <person name="Brown A."/>
            <person name="Allen N."/>
            <person name="Naylor J."/>
            <person name="Stange-Thomann N."/>
            <person name="DeArellano K."/>
            <person name="Johnson R."/>
            <person name="Linton L."/>
            <person name="McEwan P."/>
            <person name="McKernan K."/>
            <person name="Talamas J."/>
            <person name="Tirrell A."/>
            <person name="Ye W."/>
            <person name="Zimmer A."/>
            <person name="Barber R.D."/>
            <person name="Cann I."/>
            <person name="Graham D.E."/>
            <person name="Grahame D.A."/>
            <person name="Guss A.M."/>
            <person name="Hedderich R."/>
            <person name="Ingram-Smith C."/>
            <person name="Kuettner H.C."/>
            <person name="Krzycki J.A."/>
            <person name="Leigh J.A."/>
            <person name="Li W."/>
            <person name="Liu J."/>
            <person name="Mukhopadhyay B."/>
            <person name="Reeve J.N."/>
            <person name="Smith K."/>
            <person name="Springer T.A."/>
            <person name="Umayam L.A."/>
            <person name="White O."/>
            <person name="White R.H."/>
            <person name="de Macario E.C."/>
            <person name="Ferry J.G."/>
            <person name="Jarrell K.F."/>
            <person name="Jing H."/>
            <person name="Macario A.J.L."/>
            <person name="Paulsen I.T."/>
            <person name="Pritchett M."/>
            <person name="Sowers K.R."/>
            <person name="Swanson R.V."/>
            <person name="Zinder S.H."/>
            <person name="Lander E."/>
            <person name="Metcalf W.W."/>
            <person name="Birren B."/>
        </authorList>
    </citation>
    <scope>NUCLEOTIDE SEQUENCE [LARGE SCALE GENOMIC DNA]</scope>
    <source>
        <strain>ATCC 35395 / DSM 2834 / JCM 12185 / C2A</strain>
    </source>
</reference>
<name>IXTPA_METAC</name>
<accession>Q8TJS1</accession>
<proteinExistence type="inferred from homology"/>
<evidence type="ECO:0000255" key="1">
    <source>
        <dbReference type="HAMAP-Rule" id="MF_01405"/>
    </source>
</evidence>
<sequence length="184" mass="20713">MHKIVFVTGNKGKFAEIRDILKTFGIEVIQEKNGYPELQEDELEPIAAHGAQYVANKLNMPVMVDDSGIFINALNGFPGPYSRFVEDKLGNLKVLKMMEGEEDRTAYFKTVIGYCEPGKEPLVFPGVVEGKIAYEERGTGGFGYDPIFEYQGLTFGELGDTEKNKVSHRRRAVDEFLEWFTSKA</sequence>
<comment type="function">
    <text evidence="1">Pyrophosphatase that catalyzes the hydrolysis of nucleoside triphosphates to their monophosphate derivatives, with a high preference for the non-canonical purine nucleotides XTP (xanthosine triphosphate), dITP (deoxyinosine triphosphate) and ITP. Seems to function as a house-cleaning enzyme that removes non-canonical purine nucleotides from the nucleotide pool, thus preventing their incorporation into DNA/RNA and avoiding chromosomal lesions.</text>
</comment>
<comment type="catalytic activity">
    <reaction evidence="1">
        <text>XTP + H2O = XMP + diphosphate + H(+)</text>
        <dbReference type="Rhea" id="RHEA:28610"/>
        <dbReference type="ChEBI" id="CHEBI:15377"/>
        <dbReference type="ChEBI" id="CHEBI:15378"/>
        <dbReference type="ChEBI" id="CHEBI:33019"/>
        <dbReference type="ChEBI" id="CHEBI:57464"/>
        <dbReference type="ChEBI" id="CHEBI:61314"/>
        <dbReference type="EC" id="3.6.1.66"/>
    </reaction>
</comment>
<comment type="catalytic activity">
    <reaction evidence="1">
        <text>dITP + H2O = dIMP + diphosphate + H(+)</text>
        <dbReference type="Rhea" id="RHEA:28342"/>
        <dbReference type="ChEBI" id="CHEBI:15377"/>
        <dbReference type="ChEBI" id="CHEBI:15378"/>
        <dbReference type="ChEBI" id="CHEBI:33019"/>
        <dbReference type="ChEBI" id="CHEBI:61194"/>
        <dbReference type="ChEBI" id="CHEBI:61382"/>
        <dbReference type="EC" id="3.6.1.66"/>
    </reaction>
</comment>
<comment type="catalytic activity">
    <reaction evidence="1">
        <text>ITP + H2O = IMP + diphosphate + H(+)</text>
        <dbReference type="Rhea" id="RHEA:29399"/>
        <dbReference type="ChEBI" id="CHEBI:15377"/>
        <dbReference type="ChEBI" id="CHEBI:15378"/>
        <dbReference type="ChEBI" id="CHEBI:33019"/>
        <dbReference type="ChEBI" id="CHEBI:58053"/>
        <dbReference type="ChEBI" id="CHEBI:61402"/>
        <dbReference type="EC" id="3.6.1.66"/>
    </reaction>
</comment>
<comment type="cofactor">
    <cofactor evidence="1">
        <name>Mg(2+)</name>
        <dbReference type="ChEBI" id="CHEBI:18420"/>
    </cofactor>
    <text evidence="1">Binds 1 Mg(2+) ion per subunit.</text>
</comment>
<comment type="subunit">
    <text evidence="1">Homodimer.</text>
</comment>
<comment type="similarity">
    <text evidence="1">Belongs to the HAM1 NTPase family.</text>
</comment>
<protein>
    <recommendedName>
        <fullName evidence="1">dITP/XTP pyrophosphatase</fullName>
        <ecNumber evidence="1">3.6.1.66</ecNumber>
    </recommendedName>
    <alternativeName>
        <fullName evidence="1">Non-canonical purine NTP pyrophosphatase</fullName>
    </alternativeName>
    <alternativeName>
        <fullName evidence="1">Non-standard purine NTP pyrophosphatase</fullName>
    </alternativeName>
    <alternativeName>
        <fullName evidence="1">Nucleoside-triphosphate diphosphatase</fullName>
    </alternativeName>
    <alternativeName>
        <fullName evidence="1">Nucleoside-triphosphate pyrophosphatase</fullName>
        <shortName evidence="1">NTPase</shortName>
    </alternativeName>
</protein>
<feature type="chain" id="PRO_0000178191" description="dITP/XTP pyrophosphatase">
    <location>
        <begin position="1"/>
        <end position="184"/>
    </location>
</feature>
<feature type="active site" description="Proton acceptor" evidence="1">
    <location>
        <position position="66"/>
    </location>
</feature>
<feature type="binding site" evidence="1">
    <location>
        <begin position="8"/>
        <end position="13"/>
    </location>
    <ligand>
        <name>substrate</name>
    </ligand>
</feature>
<feature type="binding site" evidence="1">
    <location>
        <position position="37"/>
    </location>
    <ligand>
        <name>Mg(2+)</name>
        <dbReference type="ChEBI" id="CHEBI:18420"/>
    </ligand>
</feature>
<feature type="binding site" evidence="1">
    <location>
        <position position="66"/>
    </location>
    <ligand>
        <name>Mg(2+)</name>
        <dbReference type="ChEBI" id="CHEBI:18420"/>
    </ligand>
</feature>
<feature type="binding site" evidence="1">
    <location>
        <position position="67"/>
    </location>
    <ligand>
        <name>substrate</name>
    </ligand>
</feature>
<feature type="binding site" evidence="1">
    <location>
        <begin position="142"/>
        <end position="145"/>
    </location>
    <ligand>
        <name>substrate</name>
    </ligand>
</feature>
<feature type="binding site" evidence="1">
    <location>
        <position position="163"/>
    </location>
    <ligand>
        <name>substrate</name>
    </ligand>
</feature>
<feature type="binding site" evidence="1">
    <location>
        <begin position="168"/>
        <end position="169"/>
    </location>
    <ligand>
        <name>substrate</name>
    </ligand>
</feature>
<organism>
    <name type="scientific">Methanosarcina acetivorans (strain ATCC 35395 / DSM 2834 / JCM 12185 / C2A)</name>
    <dbReference type="NCBI Taxonomy" id="188937"/>
    <lineage>
        <taxon>Archaea</taxon>
        <taxon>Methanobacteriati</taxon>
        <taxon>Methanobacteriota</taxon>
        <taxon>Stenosarchaea group</taxon>
        <taxon>Methanomicrobia</taxon>
        <taxon>Methanosarcinales</taxon>
        <taxon>Methanosarcinaceae</taxon>
        <taxon>Methanosarcina</taxon>
    </lineage>
</organism>
<keyword id="KW-0378">Hydrolase</keyword>
<keyword id="KW-0460">Magnesium</keyword>
<keyword id="KW-0479">Metal-binding</keyword>
<keyword id="KW-0546">Nucleotide metabolism</keyword>
<keyword id="KW-0547">Nucleotide-binding</keyword>
<keyword id="KW-1185">Reference proteome</keyword>